<comment type="function">
    <text evidence="1">Catalyzes the specific phosphorylation of arginine residues in a large number of proteins. Is part of the bacterial stress response system. Protein arginine phosphorylation has a physiologically important role and is involved in the regulation of many critical cellular processes, such as protein homeostasis, motility, competence, and stringent and stress responses, by regulating gene expression and protein activity.</text>
</comment>
<comment type="catalytic activity">
    <reaction evidence="1">
        <text>L-arginyl-[protein] + ATP = N(omega)-phospho-L-arginyl-[protein] + ADP + H(+)</text>
        <dbReference type="Rhea" id="RHEA:43384"/>
        <dbReference type="Rhea" id="RHEA-COMP:10532"/>
        <dbReference type="Rhea" id="RHEA-COMP:10533"/>
        <dbReference type="ChEBI" id="CHEBI:15378"/>
        <dbReference type="ChEBI" id="CHEBI:29965"/>
        <dbReference type="ChEBI" id="CHEBI:30616"/>
        <dbReference type="ChEBI" id="CHEBI:83226"/>
        <dbReference type="ChEBI" id="CHEBI:456216"/>
        <dbReference type="EC" id="2.7.14.1"/>
    </reaction>
</comment>
<comment type="activity regulation">
    <text evidence="1">Appears to be allosterically activated by the binding of pArg-containing polypeptides to the pArg-binding pocket localized in the C-terminal domain of McsB.</text>
</comment>
<comment type="similarity">
    <text evidence="1">Belongs to the ATP:guanido phosphotransferase family.</text>
</comment>
<evidence type="ECO:0000255" key="1">
    <source>
        <dbReference type="HAMAP-Rule" id="MF_00602"/>
    </source>
</evidence>
<reference key="1">
    <citation type="submission" date="2008-10" db="EMBL/GenBank/DDBJ databases">
        <title>Genome sequence of Bacillus cereus B4264.</title>
        <authorList>
            <person name="Dodson R.J."/>
            <person name="Durkin A.S."/>
            <person name="Rosovitz M.J."/>
            <person name="Rasko D.A."/>
            <person name="Hoffmaster A."/>
            <person name="Ravel J."/>
            <person name="Sutton G."/>
        </authorList>
    </citation>
    <scope>NUCLEOTIDE SEQUENCE [LARGE SCALE GENOMIC DNA]</scope>
    <source>
        <strain>B4264</strain>
    </source>
</reference>
<keyword id="KW-0021">Allosteric enzyme</keyword>
<keyword id="KW-0067">ATP-binding</keyword>
<keyword id="KW-0418">Kinase</keyword>
<keyword id="KW-0547">Nucleotide-binding</keyword>
<keyword id="KW-0808">Transferase</keyword>
<gene>
    <name evidence="1" type="primary">mcsB</name>
    <name type="ordered locus">BCB4264_A0101</name>
</gene>
<dbReference type="EC" id="2.7.14.1" evidence="1"/>
<dbReference type="EMBL" id="CP001176">
    <property type="protein sequence ID" value="ACK62305.1"/>
    <property type="molecule type" value="Genomic_DNA"/>
</dbReference>
<dbReference type="RefSeq" id="WP_000050842.1">
    <property type="nucleotide sequence ID" value="NC_011725.1"/>
</dbReference>
<dbReference type="SMR" id="B7HJ19"/>
<dbReference type="KEGG" id="bcb:BCB4264_A0101"/>
<dbReference type="HOGENOM" id="CLU_066591_1_0_9"/>
<dbReference type="Proteomes" id="UP000007096">
    <property type="component" value="Chromosome"/>
</dbReference>
<dbReference type="GO" id="GO:0005615">
    <property type="term" value="C:extracellular space"/>
    <property type="evidence" value="ECO:0007669"/>
    <property type="project" value="TreeGrafter"/>
</dbReference>
<dbReference type="GO" id="GO:0005524">
    <property type="term" value="F:ATP binding"/>
    <property type="evidence" value="ECO:0007669"/>
    <property type="project" value="UniProtKB-KW"/>
</dbReference>
<dbReference type="GO" id="GO:0004111">
    <property type="term" value="F:creatine kinase activity"/>
    <property type="evidence" value="ECO:0007669"/>
    <property type="project" value="InterPro"/>
</dbReference>
<dbReference type="GO" id="GO:0004672">
    <property type="term" value="F:protein kinase activity"/>
    <property type="evidence" value="ECO:0007669"/>
    <property type="project" value="UniProtKB-UniRule"/>
</dbReference>
<dbReference type="GO" id="GO:0046314">
    <property type="term" value="P:phosphocreatine biosynthetic process"/>
    <property type="evidence" value="ECO:0007669"/>
    <property type="project" value="InterPro"/>
</dbReference>
<dbReference type="CDD" id="cd07930">
    <property type="entry name" value="bacterial_phosphagen_kinase"/>
    <property type="match status" value="1"/>
</dbReference>
<dbReference type="FunFam" id="3.30.590.10:FF:000007">
    <property type="entry name" value="Protein-arginine kinase"/>
    <property type="match status" value="1"/>
</dbReference>
<dbReference type="Gene3D" id="3.30.590.10">
    <property type="entry name" value="Glutamine synthetase/guanido kinase, catalytic domain"/>
    <property type="match status" value="1"/>
</dbReference>
<dbReference type="HAMAP" id="MF_00602">
    <property type="entry name" value="Prot_Arg_kinase"/>
    <property type="match status" value="1"/>
</dbReference>
<dbReference type="InterPro" id="IPR023660">
    <property type="entry name" value="Arg_Kinase"/>
</dbReference>
<dbReference type="InterPro" id="IPR000749">
    <property type="entry name" value="ATP-guanido_PTrfase"/>
</dbReference>
<dbReference type="InterPro" id="IPR022415">
    <property type="entry name" value="ATP-guanido_PTrfase_AS"/>
</dbReference>
<dbReference type="InterPro" id="IPR022414">
    <property type="entry name" value="ATP-guanido_PTrfase_cat"/>
</dbReference>
<dbReference type="InterPro" id="IPR014746">
    <property type="entry name" value="Gln_synth/guanido_kin_cat_dom"/>
</dbReference>
<dbReference type="NCBIfam" id="NF002194">
    <property type="entry name" value="PRK01059.1-4"/>
    <property type="match status" value="1"/>
</dbReference>
<dbReference type="NCBIfam" id="NF002195">
    <property type="entry name" value="PRK01059.1-5"/>
    <property type="match status" value="1"/>
</dbReference>
<dbReference type="PANTHER" id="PTHR11547:SF38">
    <property type="entry name" value="ARGININE KINASE 1-RELATED"/>
    <property type="match status" value="1"/>
</dbReference>
<dbReference type="PANTHER" id="PTHR11547">
    <property type="entry name" value="ARGININE OR CREATINE KINASE"/>
    <property type="match status" value="1"/>
</dbReference>
<dbReference type="Pfam" id="PF00217">
    <property type="entry name" value="ATP-gua_Ptrans"/>
    <property type="match status" value="1"/>
</dbReference>
<dbReference type="SUPFAM" id="SSF55931">
    <property type="entry name" value="Glutamine synthetase/guanido kinase"/>
    <property type="match status" value="1"/>
</dbReference>
<dbReference type="PROSITE" id="PS00112">
    <property type="entry name" value="PHOSPHAGEN_KINASE"/>
    <property type="match status" value="1"/>
</dbReference>
<dbReference type="PROSITE" id="PS51510">
    <property type="entry name" value="PHOSPHAGEN_KINASE_C"/>
    <property type="match status" value="1"/>
</dbReference>
<proteinExistence type="inferred from homology"/>
<feature type="chain" id="PRO_1000130108" description="Protein-arginine kinase">
    <location>
        <begin position="1"/>
        <end position="354"/>
    </location>
</feature>
<feature type="domain" description="Phosphagen kinase C-terminal" evidence="1">
    <location>
        <begin position="24"/>
        <end position="254"/>
    </location>
</feature>
<feature type="short sequence motif" description="RDXXRA motif of the pArg binding pocket involved in allosteric regulation" evidence="1">
    <location>
        <begin position="337"/>
        <end position="342"/>
    </location>
</feature>
<feature type="binding site" evidence="1">
    <location>
        <begin position="27"/>
        <end position="31"/>
    </location>
    <ligand>
        <name>ATP</name>
        <dbReference type="ChEBI" id="CHEBI:30616"/>
    </ligand>
</feature>
<feature type="binding site" evidence="1">
    <location>
        <position position="92"/>
    </location>
    <ligand>
        <name>ATP</name>
        <dbReference type="ChEBI" id="CHEBI:30616"/>
    </ligand>
</feature>
<feature type="binding site" evidence="1">
    <location>
        <position position="125"/>
    </location>
    <ligand>
        <name>ATP</name>
        <dbReference type="ChEBI" id="CHEBI:30616"/>
    </ligand>
</feature>
<feature type="binding site" evidence="1">
    <location>
        <begin position="176"/>
        <end position="180"/>
    </location>
    <ligand>
        <name>ATP</name>
        <dbReference type="ChEBI" id="CHEBI:30616"/>
    </ligand>
</feature>
<feature type="binding site" evidence="1">
    <location>
        <begin position="207"/>
        <end position="212"/>
    </location>
    <ligand>
        <name>ATP</name>
        <dbReference type="ChEBI" id="CHEBI:30616"/>
    </ligand>
</feature>
<accession>B7HJ19</accession>
<organism>
    <name type="scientific">Bacillus cereus (strain B4264)</name>
    <dbReference type="NCBI Taxonomy" id="405532"/>
    <lineage>
        <taxon>Bacteria</taxon>
        <taxon>Bacillati</taxon>
        <taxon>Bacillota</taxon>
        <taxon>Bacilli</taxon>
        <taxon>Bacillales</taxon>
        <taxon>Bacillaceae</taxon>
        <taxon>Bacillus</taxon>
        <taxon>Bacillus cereus group</taxon>
    </lineage>
</organism>
<protein>
    <recommendedName>
        <fullName evidence="1">Protein-arginine kinase</fullName>
        <ecNumber evidence="1">2.7.14.1</ecNumber>
    </recommendedName>
</protein>
<sequence length="354" mass="39869">MSLDKIMNEAISPWMKGDGPDSDIVLSSRIRLARNFKQYQFSTMQNEEEAQKVQELFKKKFINKAVEPFGKFGLLKMNELTPLQRRVLVEKHLISPNLAGTEYGACLLSESEHISVMLNEEDHIRIQCLFPGLQLSKALQSANQIDNWIEKEVEYAFDESLGYITSCPTNVGTGLRASVMIHLPGLVLTKRISRIIQVIQKLGLVVRGIYGEGSEALGNIFQVSNQMTLGKSEEDIIADLKSVMQQIIQQEKLARELIVQNSSIELEDKVYRSYGILANSRLIQSAEAATCLSDVRLGIDLGYIKGISRNILTELMVLTQPGILQQYAGGPLGPEERDYRRATLIRERLRIEKN</sequence>
<name>MCSB_BACC4</name>